<organism>
    <name type="scientific">Methanococcus maripaludis (strain C7 / ATCC BAA-1331)</name>
    <dbReference type="NCBI Taxonomy" id="426368"/>
    <lineage>
        <taxon>Archaea</taxon>
        <taxon>Methanobacteriati</taxon>
        <taxon>Methanobacteriota</taxon>
        <taxon>Methanomada group</taxon>
        <taxon>Methanococci</taxon>
        <taxon>Methanococcales</taxon>
        <taxon>Methanococcaceae</taxon>
        <taxon>Methanococcus</taxon>
    </lineage>
</organism>
<protein>
    <recommendedName>
        <fullName evidence="1">tRNA (guanine(26)-N(2))-dimethyltransferase</fullName>
        <ecNumber evidence="1">2.1.1.216</ecNumber>
    </recommendedName>
    <alternativeName>
        <fullName evidence="1">tRNA 2,2-dimethylguanosine-26 methyltransferase</fullName>
    </alternativeName>
    <alternativeName>
        <fullName evidence="1">tRNA(guanine-26,N(2)-N(2)) methyltransferase</fullName>
    </alternativeName>
    <alternativeName>
        <fullName evidence="1">tRNA(m(2,2)G26)dimethyltransferase</fullName>
    </alternativeName>
</protein>
<accession>A6VIL5</accession>
<evidence type="ECO:0000255" key="1">
    <source>
        <dbReference type="HAMAP-Rule" id="MF_00290"/>
    </source>
</evidence>
<proteinExistence type="inferred from homology"/>
<name>TRM1_METM7</name>
<reference key="1">
    <citation type="submission" date="2007-06" db="EMBL/GenBank/DDBJ databases">
        <title>Complete sequence of Methanococcus maripaludis C7.</title>
        <authorList>
            <consortium name="US DOE Joint Genome Institute"/>
            <person name="Copeland A."/>
            <person name="Lucas S."/>
            <person name="Lapidus A."/>
            <person name="Barry K."/>
            <person name="Glavina del Rio T."/>
            <person name="Dalin E."/>
            <person name="Tice H."/>
            <person name="Pitluck S."/>
            <person name="Clum A."/>
            <person name="Schmutz J."/>
            <person name="Larimer F."/>
            <person name="Land M."/>
            <person name="Hauser L."/>
            <person name="Kyrpides N."/>
            <person name="Anderson I."/>
            <person name="Sieprawska-Lupa M."/>
            <person name="Whitman W.B."/>
            <person name="Richardson P."/>
        </authorList>
    </citation>
    <scope>NUCLEOTIDE SEQUENCE [LARGE SCALE GENOMIC DNA]</scope>
    <source>
        <strain>C7 / ATCC BAA-1331</strain>
    </source>
</reference>
<sequence>MKIISEGETKLMVPEESTLSKKDTVFYNPVMETNRDISVSVVQSFLDNFKRDEFLMCDPLGGSGARGIRYANELKFNGELKVSIGDINPSAVKMIKENLKLNELENVEVFHEDANVLLSKNFKIFNVVDLDPFGSPVPYLDSGIRASLTKGGLLCMTATDTAVLCGAYRKTCIRKYNAIPLKGDKELAVRLMIGYAVKMASKYDIGLKPIFSHVTDHYARTFMVTERGAGKADSAIENLGYIRQDSEQKSFKTFEEGYEKGYAGPFYLGEISDKNIVQNSLETAKNRNYSKRAIDILELISKESKIEQVGCFDIHELCSFIKKLVPPVNDIMENLKENGFKVSRVHYNPYGLKTDAELSDLVVLISEYHSKKY</sequence>
<gene>
    <name evidence="1" type="primary">trm1</name>
    <name type="ordered locus">MmarC7_1228</name>
</gene>
<comment type="function">
    <text evidence="1">Dimethylates a single guanine residue at position 26 of a number of tRNAs using S-adenosyl-L-methionine as donor of the methyl groups.</text>
</comment>
<comment type="catalytic activity">
    <reaction evidence="1">
        <text>guanosine(26) in tRNA + 2 S-adenosyl-L-methionine = N(2)-dimethylguanosine(26) in tRNA + 2 S-adenosyl-L-homocysteine + 2 H(+)</text>
        <dbReference type="Rhea" id="RHEA:43140"/>
        <dbReference type="Rhea" id="RHEA-COMP:10359"/>
        <dbReference type="Rhea" id="RHEA-COMP:10360"/>
        <dbReference type="ChEBI" id="CHEBI:15378"/>
        <dbReference type="ChEBI" id="CHEBI:57856"/>
        <dbReference type="ChEBI" id="CHEBI:59789"/>
        <dbReference type="ChEBI" id="CHEBI:74269"/>
        <dbReference type="ChEBI" id="CHEBI:74513"/>
        <dbReference type="EC" id="2.1.1.216"/>
    </reaction>
</comment>
<comment type="similarity">
    <text evidence="1">Belongs to the class I-like SAM-binding methyltransferase superfamily. Trm1 family.</text>
</comment>
<keyword id="KW-0489">Methyltransferase</keyword>
<keyword id="KW-0694">RNA-binding</keyword>
<keyword id="KW-0949">S-adenosyl-L-methionine</keyword>
<keyword id="KW-0808">Transferase</keyword>
<keyword id="KW-0819">tRNA processing</keyword>
<keyword id="KW-0820">tRNA-binding</keyword>
<dbReference type="EC" id="2.1.1.216" evidence="1"/>
<dbReference type="EMBL" id="CP000745">
    <property type="protein sequence ID" value="ABR66291.1"/>
    <property type="molecule type" value="Genomic_DNA"/>
</dbReference>
<dbReference type="SMR" id="A6VIL5"/>
<dbReference type="STRING" id="426368.MmarC7_1228"/>
<dbReference type="KEGG" id="mmz:MmarC7_1228"/>
<dbReference type="eggNOG" id="arCOG01219">
    <property type="taxonomic scope" value="Archaea"/>
</dbReference>
<dbReference type="HOGENOM" id="CLU_010862_5_1_2"/>
<dbReference type="OrthoDB" id="372177at2157"/>
<dbReference type="GO" id="GO:0160104">
    <property type="term" value="F:tRNA (guanine(26)-N2)-dimethyltransferase activity"/>
    <property type="evidence" value="ECO:0007669"/>
    <property type="project" value="UniProtKB-UniRule"/>
</dbReference>
<dbReference type="GO" id="GO:0000049">
    <property type="term" value="F:tRNA binding"/>
    <property type="evidence" value="ECO:0007669"/>
    <property type="project" value="UniProtKB-KW"/>
</dbReference>
<dbReference type="GO" id="GO:0002940">
    <property type="term" value="P:tRNA N2-guanine methylation"/>
    <property type="evidence" value="ECO:0007669"/>
    <property type="project" value="TreeGrafter"/>
</dbReference>
<dbReference type="CDD" id="cd02440">
    <property type="entry name" value="AdoMet_MTases"/>
    <property type="match status" value="1"/>
</dbReference>
<dbReference type="Gene3D" id="3.30.56.70">
    <property type="entry name" value="N2,N2-dimethylguanosine tRNA methyltransferase, C-terminal domain"/>
    <property type="match status" value="1"/>
</dbReference>
<dbReference type="Gene3D" id="3.40.50.150">
    <property type="entry name" value="Vaccinia Virus protein VP39"/>
    <property type="match status" value="1"/>
</dbReference>
<dbReference type="HAMAP" id="MF_00290">
    <property type="entry name" value="tRNA_dimethyltr_TRM1"/>
    <property type="match status" value="1"/>
</dbReference>
<dbReference type="InterPro" id="IPR029063">
    <property type="entry name" value="SAM-dependent_MTases_sf"/>
</dbReference>
<dbReference type="InterPro" id="IPR002905">
    <property type="entry name" value="Trm1"/>
</dbReference>
<dbReference type="InterPro" id="IPR022923">
    <property type="entry name" value="TRM1_arc_bac"/>
</dbReference>
<dbReference type="InterPro" id="IPR042296">
    <property type="entry name" value="tRNA_met_Trm1_C"/>
</dbReference>
<dbReference type="NCBIfam" id="TIGR00308">
    <property type="entry name" value="TRM1"/>
    <property type="match status" value="1"/>
</dbReference>
<dbReference type="PANTHER" id="PTHR10631">
    <property type="entry name" value="N 2 ,N 2 -DIMETHYLGUANOSINE TRNA METHYLTRANSFERASE"/>
    <property type="match status" value="1"/>
</dbReference>
<dbReference type="PANTHER" id="PTHR10631:SF3">
    <property type="entry name" value="TRNA (GUANINE(26)-N(2))-DIMETHYLTRANSFERASE"/>
    <property type="match status" value="1"/>
</dbReference>
<dbReference type="Pfam" id="PF02005">
    <property type="entry name" value="TRM"/>
    <property type="match status" value="1"/>
</dbReference>
<dbReference type="SUPFAM" id="SSF53335">
    <property type="entry name" value="S-adenosyl-L-methionine-dependent methyltransferases"/>
    <property type="match status" value="1"/>
</dbReference>
<dbReference type="PROSITE" id="PS51626">
    <property type="entry name" value="SAM_MT_TRM1"/>
    <property type="match status" value="1"/>
</dbReference>
<feature type="chain" id="PRO_1000114979" description="tRNA (guanine(26)-N(2))-dimethyltransferase">
    <location>
        <begin position="1"/>
        <end position="373"/>
    </location>
</feature>
<feature type="domain" description="Trm1 methyltransferase" evidence="1">
    <location>
        <begin position="2"/>
        <end position="365"/>
    </location>
</feature>
<feature type="binding site" evidence="1">
    <location>
        <position position="35"/>
    </location>
    <ligand>
        <name>S-adenosyl-L-methionine</name>
        <dbReference type="ChEBI" id="CHEBI:59789"/>
    </ligand>
</feature>
<feature type="binding site" evidence="1">
    <location>
        <position position="66"/>
    </location>
    <ligand>
        <name>S-adenosyl-L-methionine</name>
        <dbReference type="ChEBI" id="CHEBI:59789"/>
    </ligand>
</feature>
<feature type="binding site" evidence="1">
    <location>
        <position position="86"/>
    </location>
    <ligand>
        <name>S-adenosyl-L-methionine</name>
        <dbReference type="ChEBI" id="CHEBI:59789"/>
    </ligand>
</feature>
<feature type="binding site" evidence="1">
    <location>
        <position position="113"/>
    </location>
    <ligand>
        <name>S-adenosyl-L-methionine</name>
        <dbReference type="ChEBI" id="CHEBI:59789"/>
    </ligand>
</feature>
<feature type="binding site" evidence="1">
    <location>
        <position position="114"/>
    </location>
    <ligand>
        <name>S-adenosyl-L-methionine</name>
        <dbReference type="ChEBI" id="CHEBI:59789"/>
    </ligand>
</feature>